<keyword id="KW-0002">3D-structure</keyword>
<keyword id="KW-0012">Acyltransferase</keyword>
<keyword id="KW-0808">Transferase</keyword>
<protein>
    <recommendedName>
        <fullName evidence="4">L-methionine sulfoximine/L-methionine sulfone acetyltransferase</fullName>
        <ecNumber evidence="3">2.3.1.-</ecNumber>
    </recommendedName>
    <alternativeName>
        <fullName evidence="1">Methionine derivative detoxifier A</fullName>
        <shortName evidence="1">MDDA</shortName>
    </alternativeName>
</protein>
<comment type="function">
    <text evidence="3">Plays a role in the resistance against the toxic effects of L-methionine sulfoximine (MSX), a rare amino acid, which inhibits glutamine synthetase (GlnA). Catalyzes the acetylation of L-methionine sulfoximine (MSX). It can also use L-methionine sulfone (MSO).</text>
</comment>
<comment type="catalytic activity">
    <reaction evidence="3">
        <text>L-methionine sulfoximine + acetyl-CoA = N-acetyl-L-methionine sulfoximine + CoA + H(+)</text>
        <dbReference type="Rhea" id="RHEA:47660"/>
        <dbReference type="ChEBI" id="CHEBI:15378"/>
        <dbReference type="ChEBI" id="CHEBI:57287"/>
        <dbReference type="ChEBI" id="CHEBI:57288"/>
        <dbReference type="ChEBI" id="CHEBI:87826"/>
        <dbReference type="ChEBI" id="CHEBI:87827"/>
    </reaction>
</comment>
<comment type="catalytic activity">
    <reaction evidence="3">
        <text>L-methionine sulfone + acetyl-CoA = N-acetyl-L-methionine sulfone + CoA + H(+)</text>
        <dbReference type="Rhea" id="RHEA:47656"/>
        <dbReference type="ChEBI" id="CHEBI:15378"/>
        <dbReference type="ChEBI" id="CHEBI:57287"/>
        <dbReference type="ChEBI" id="CHEBI:57288"/>
        <dbReference type="ChEBI" id="CHEBI:87824"/>
        <dbReference type="ChEBI" id="CHEBI:87825"/>
    </reaction>
</comment>
<comment type="biophysicochemical properties">
    <kinetics>
        <KM evidence="3">0.06 mM for acetyl-CoA (at pH 7.2 and 37 degrees Celsius)</KM>
        <KM evidence="3">1.3 mM for MSX (at pH 7.2 and 37 degrees Celsius)</KM>
        <KM evidence="3">1.3 mM for MSO (at pH 7.2 and 37 degrees Celsius)</KM>
        <text evidence="3">kcat is 610 sec(-1) for acetyltransferase activity with MSO as substrate (at pH 7.2 and 37 degrees Celsius). kcat is 505 sec(-1) for acetyltransferase activity with MSX as substrate (at pH 7.2 and 37 degrees Celsius).</text>
    </kinetics>
</comment>
<comment type="subunit">
    <text evidence="3">Homodimer.</text>
</comment>
<comment type="disruption phenotype">
    <text evidence="3">Cells lacking this gene do not have acetyltransferase activity and induce a degradation of proteins. Growth in succinate medium with glutamate, ammonium, urea, and proline as nitrogen sources is stopped by the addition of 200 uM MSX at the beginning of the log phase, and no further growth is observed for the next 12 h. Growth with glutamine as a nitrogen source is unaffected.</text>
</comment>
<dbReference type="EC" id="2.3.1.-" evidence="3"/>
<dbReference type="EMBL" id="CP000744">
    <property type="protein sequence ID" value="ABR81107.1"/>
    <property type="molecule type" value="Genomic_DNA"/>
</dbReference>
<dbReference type="RefSeq" id="WP_003157482.1">
    <property type="nucleotide sequence ID" value="NC_009656.1"/>
</dbReference>
<dbReference type="PDB" id="2J8M">
    <property type="method" value="X-ray"/>
    <property type="resolution" value="1.44 A"/>
    <property type="chains" value="A/B=1-172"/>
</dbReference>
<dbReference type="PDB" id="2J8N">
    <property type="method" value="X-ray"/>
    <property type="resolution" value="2.35 A"/>
    <property type="chains" value="A/B=1-172"/>
</dbReference>
<dbReference type="PDB" id="2J8R">
    <property type="method" value="X-ray"/>
    <property type="resolution" value="1.55 A"/>
    <property type="chains" value="A/B=1-172"/>
</dbReference>
<dbReference type="PDBsum" id="2J8M"/>
<dbReference type="PDBsum" id="2J8N"/>
<dbReference type="PDBsum" id="2J8R"/>
<dbReference type="SMR" id="A6VCX3"/>
<dbReference type="KEGG" id="pap:PSPA7_5587"/>
<dbReference type="HOGENOM" id="CLU_013985_4_4_6"/>
<dbReference type="Proteomes" id="UP000001582">
    <property type="component" value="Chromosome"/>
</dbReference>
<dbReference type="GO" id="GO:0016747">
    <property type="term" value="F:acyltransferase activity, transferring groups other than amino-acyl groups"/>
    <property type="evidence" value="ECO:0000314"/>
    <property type="project" value="UniProtKB"/>
</dbReference>
<dbReference type="CDD" id="cd04301">
    <property type="entry name" value="NAT_SF"/>
    <property type="match status" value="1"/>
</dbReference>
<dbReference type="FunFam" id="3.40.630.30:FF:000026">
    <property type="entry name" value="Phosphinothricin acetyltransferase"/>
    <property type="match status" value="1"/>
</dbReference>
<dbReference type="Gene3D" id="3.40.630.30">
    <property type="match status" value="1"/>
</dbReference>
<dbReference type="InterPro" id="IPR016181">
    <property type="entry name" value="Acyl_CoA_acyltransferase"/>
</dbReference>
<dbReference type="InterPro" id="IPR000182">
    <property type="entry name" value="GNAT_dom"/>
</dbReference>
<dbReference type="PANTHER" id="PTHR43072">
    <property type="entry name" value="N-ACETYLTRANSFERASE"/>
    <property type="match status" value="1"/>
</dbReference>
<dbReference type="PANTHER" id="PTHR43072:SF23">
    <property type="entry name" value="UPF0039 PROTEIN C11D3.02C"/>
    <property type="match status" value="1"/>
</dbReference>
<dbReference type="Pfam" id="PF00583">
    <property type="entry name" value="Acetyltransf_1"/>
    <property type="match status" value="1"/>
</dbReference>
<dbReference type="SUPFAM" id="SSF55729">
    <property type="entry name" value="Acyl-CoA N-acyltransferases (Nat)"/>
    <property type="match status" value="1"/>
</dbReference>
<dbReference type="PROSITE" id="PS51186">
    <property type="entry name" value="GNAT"/>
    <property type="match status" value="1"/>
</dbReference>
<accession>A6VCX3</accession>
<sequence length="172" mass="18713">MSASIRDAGVADLPGILAIYNDAVGNTTAIWNETPVDLANRQAWFDARARQGYPILVASDAAGEVLGYASYGDWRPFEGFRGTVEHSVYVRDDQRGKGLGVQLLQALIERARAQGLHVMVAAIESGNAASIGLHRRLGFEISGQMPQVGQKFGRWLDLTFMQLNLDPTRSAP</sequence>
<proteinExistence type="evidence at protein level"/>
<reference key="1">
    <citation type="submission" date="2007-06" db="EMBL/GenBank/DDBJ databases">
        <authorList>
            <person name="Dodson R.J."/>
            <person name="Harkins D."/>
            <person name="Paulsen I.T."/>
        </authorList>
    </citation>
    <scope>NUCLEOTIDE SEQUENCE [LARGE SCALE GENOMIC DNA]</scope>
    <source>
        <strain>DSM 24068 / PA7</strain>
    </source>
</reference>
<reference key="2">
    <citation type="journal article" date="2007" name="Biochemistry">
        <title>l-Methionine sulfoximine, but not phosphinothricin, is a substrate for an acetyltransferase (gene PA4866) from Pseudomonas aeruginosa: structural and functional studies.</title>
        <authorList>
            <person name="Davies A.M."/>
            <person name="Tata R."/>
            <person name="Beavil R.L."/>
            <person name="Sutton B.J."/>
            <person name="Brown P.R."/>
        </authorList>
    </citation>
    <scope>X-RAY CRYSTALLOGRAPHY (1.44 ANGSTROMS) IN COMPLEX WITH SUBSTRATE</scope>
    <scope>FUNCTION</scope>
    <scope>CATALYTIC ACTIVITY</scope>
    <scope>BIOPHYSICOCHEMICAL PROPERTIES</scope>
    <scope>DISRUPTION PHENOTYPE</scope>
    <scope>SUBUNIT</scope>
    <scope>SUBSTRATE SPECIFICITY</scope>
</reference>
<evidence type="ECO:0000250" key="1">
    <source>
        <dbReference type="UniProtKB" id="Q8ZPD3"/>
    </source>
</evidence>
<evidence type="ECO:0000255" key="2">
    <source>
        <dbReference type="PROSITE-ProRule" id="PRU00532"/>
    </source>
</evidence>
<evidence type="ECO:0000269" key="3">
    <source>
    </source>
</evidence>
<evidence type="ECO:0000303" key="4">
    <source>
    </source>
</evidence>
<evidence type="ECO:0007829" key="5">
    <source>
        <dbReference type="PDB" id="2J8M"/>
    </source>
</evidence>
<evidence type="ECO:0007829" key="6">
    <source>
        <dbReference type="PDB" id="2J8N"/>
    </source>
</evidence>
<gene>
    <name type="ordered locus">PSPA7_5587</name>
</gene>
<organism>
    <name type="scientific">Pseudomonas paraeruginosa (strain DSM 24068 / PA7)</name>
    <name type="common">Pseudomonas aeruginosa (strain PA7)</name>
    <dbReference type="NCBI Taxonomy" id="381754"/>
    <lineage>
        <taxon>Bacteria</taxon>
        <taxon>Pseudomonadati</taxon>
        <taxon>Pseudomonadota</taxon>
        <taxon>Gammaproteobacteria</taxon>
        <taxon>Pseudomonadales</taxon>
        <taxon>Pseudomonadaceae</taxon>
        <taxon>Pseudomonas</taxon>
        <taxon>Pseudomonas paraeruginosa</taxon>
    </lineage>
</organism>
<name>MDDA_PSEP7</name>
<feature type="chain" id="PRO_0000433344" description="L-methionine sulfoximine/L-methionine sulfone acetyltransferase">
    <location>
        <begin position="1"/>
        <end position="172"/>
    </location>
</feature>
<feature type="domain" description="N-acetyltransferase" evidence="2">
    <location>
        <begin position="3"/>
        <end position="166"/>
    </location>
</feature>
<feature type="binding site" evidence="3">
    <location>
        <begin position="75"/>
        <end position="77"/>
    </location>
    <ligand>
        <name>substrate</name>
    </ligand>
</feature>
<feature type="binding site" evidence="3">
    <location>
        <begin position="85"/>
        <end position="87"/>
    </location>
    <ligand>
        <name>substrate</name>
    </ligand>
</feature>
<feature type="binding site" evidence="1">
    <location>
        <begin position="88"/>
        <end position="90"/>
    </location>
    <ligand>
        <name>acetyl-CoA</name>
        <dbReference type="ChEBI" id="CHEBI:57288"/>
    </ligand>
</feature>
<feature type="binding site" evidence="1">
    <location>
        <begin position="96"/>
        <end position="101"/>
    </location>
    <ligand>
        <name>acetyl-CoA</name>
        <dbReference type="ChEBI" id="CHEBI:57288"/>
    </ligand>
</feature>
<feature type="binding site" evidence="1">
    <location>
        <position position="127"/>
    </location>
    <ligand>
        <name>acetyl-CoA</name>
        <dbReference type="ChEBI" id="CHEBI:57288"/>
    </ligand>
</feature>
<feature type="strand" evidence="5">
    <location>
        <begin position="4"/>
        <end position="7"/>
    </location>
</feature>
<feature type="helix" evidence="5">
    <location>
        <begin position="10"/>
        <end position="12"/>
    </location>
</feature>
<feature type="helix" evidence="5">
    <location>
        <begin position="13"/>
        <end position="26"/>
    </location>
</feature>
<feature type="strand" evidence="5">
    <location>
        <begin position="28"/>
        <end position="31"/>
    </location>
</feature>
<feature type="helix" evidence="5">
    <location>
        <begin position="38"/>
        <end position="51"/>
    </location>
</feature>
<feature type="strand" evidence="5">
    <location>
        <begin position="55"/>
        <end position="59"/>
    </location>
</feature>
<feature type="strand" evidence="5">
    <location>
        <begin position="65"/>
        <end position="77"/>
    </location>
</feature>
<feature type="helix" evidence="5">
    <location>
        <begin position="78"/>
        <end position="80"/>
    </location>
</feature>
<feature type="strand" evidence="5">
    <location>
        <begin position="83"/>
        <end position="90"/>
    </location>
</feature>
<feature type="helix" evidence="6">
    <location>
        <begin position="92"/>
        <end position="94"/>
    </location>
</feature>
<feature type="helix" evidence="5">
    <location>
        <begin position="99"/>
        <end position="113"/>
    </location>
</feature>
<feature type="strand" evidence="5">
    <location>
        <begin position="118"/>
        <end position="124"/>
    </location>
</feature>
<feature type="helix" evidence="5">
    <location>
        <begin position="128"/>
        <end position="136"/>
    </location>
</feature>
<feature type="strand" evidence="5">
    <location>
        <begin position="140"/>
        <end position="151"/>
    </location>
</feature>
<feature type="strand" evidence="5">
    <location>
        <begin position="154"/>
        <end position="165"/>
    </location>
</feature>